<protein>
    <recommendedName>
        <fullName evidence="1">Ribonuclease P protein component</fullName>
        <shortName evidence="1">RNase P protein</shortName>
        <shortName evidence="1">RNaseP protein</shortName>
        <ecNumber evidence="1">3.1.26.5</ecNumber>
    </recommendedName>
    <alternativeName>
        <fullName evidence="1">Protein C5</fullName>
    </alternativeName>
</protein>
<organism>
    <name type="scientific">Acinetobacter baylyi (strain ATCC 33305 / BD413 / ADP1)</name>
    <dbReference type="NCBI Taxonomy" id="62977"/>
    <lineage>
        <taxon>Bacteria</taxon>
        <taxon>Pseudomonadati</taxon>
        <taxon>Pseudomonadota</taxon>
        <taxon>Gammaproteobacteria</taxon>
        <taxon>Moraxellales</taxon>
        <taxon>Moraxellaceae</taxon>
        <taxon>Acinetobacter</taxon>
    </lineage>
</organism>
<name>RNPA_ACIAD</name>
<proteinExistence type="inferred from homology"/>
<feature type="chain" id="PRO_0000198413" description="Ribonuclease P protein component">
    <location>
        <begin position="1"/>
        <end position="131"/>
    </location>
</feature>
<dbReference type="EC" id="3.1.26.5" evidence="1"/>
<dbReference type="EMBL" id="CR543861">
    <property type="protein sequence ID" value="CAG70309.1"/>
    <property type="molecule type" value="Genomic_DNA"/>
</dbReference>
<dbReference type="SMR" id="Q6F6K8"/>
<dbReference type="STRING" id="202950.GCA_001485005_03178"/>
<dbReference type="KEGG" id="aci:ACIAD3683"/>
<dbReference type="eggNOG" id="COG0594">
    <property type="taxonomic scope" value="Bacteria"/>
</dbReference>
<dbReference type="HOGENOM" id="CLU_117179_11_0_6"/>
<dbReference type="Proteomes" id="UP000000430">
    <property type="component" value="Chromosome"/>
</dbReference>
<dbReference type="GO" id="GO:0030677">
    <property type="term" value="C:ribonuclease P complex"/>
    <property type="evidence" value="ECO:0007669"/>
    <property type="project" value="TreeGrafter"/>
</dbReference>
<dbReference type="GO" id="GO:0042781">
    <property type="term" value="F:3'-tRNA processing endoribonuclease activity"/>
    <property type="evidence" value="ECO:0007669"/>
    <property type="project" value="TreeGrafter"/>
</dbReference>
<dbReference type="GO" id="GO:0004526">
    <property type="term" value="F:ribonuclease P activity"/>
    <property type="evidence" value="ECO:0007669"/>
    <property type="project" value="UniProtKB-UniRule"/>
</dbReference>
<dbReference type="GO" id="GO:0000049">
    <property type="term" value="F:tRNA binding"/>
    <property type="evidence" value="ECO:0007669"/>
    <property type="project" value="UniProtKB-UniRule"/>
</dbReference>
<dbReference type="GO" id="GO:0001682">
    <property type="term" value="P:tRNA 5'-leader removal"/>
    <property type="evidence" value="ECO:0007669"/>
    <property type="project" value="UniProtKB-UniRule"/>
</dbReference>
<dbReference type="Gene3D" id="3.30.230.10">
    <property type="match status" value="1"/>
</dbReference>
<dbReference type="HAMAP" id="MF_00227">
    <property type="entry name" value="RNase_P"/>
    <property type="match status" value="1"/>
</dbReference>
<dbReference type="InterPro" id="IPR020568">
    <property type="entry name" value="Ribosomal_Su5_D2-typ_SF"/>
</dbReference>
<dbReference type="InterPro" id="IPR014721">
    <property type="entry name" value="Ribsml_uS5_D2-typ_fold_subgr"/>
</dbReference>
<dbReference type="InterPro" id="IPR000100">
    <property type="entry name" value="RNase_P"/>
</dbReference>
<dbReference type="InterPro" id="IPR020539">
    <property type="entry name" value="RNase_P_CS"/>
</dbReference>
<dbReference type="NCBIfam" id="TIGR00188">
    <property type="entry name" value="rnpA"/>
    <property type="match status" value="1"/>
</dbReference>
<dbReference type="PANTHER" id="PTHR33992">
    <property type="entry name" value="RIBONUCLEASE P PROTEIN COMPONENT"/>
    <property type="match status" value="1"/>
</dbReference>
<dbReference type="PANTHER" id="PTHR33992:SF1">
    <property type="entry name" value="RIBONUCLEASE P PROTEIN COMPONENT"/>
    <property type="match status" value="1"/>
</dbReference>
<dbReference type="Pfam" id="PF00825">
    <property type="entry name" value="Ribonuclease_P"/>
    <property type="match status" value="1"/>
</dbReference>
<dbReference type="SUPFAM" id="SSF54211">
    <property type="entry name" value="Ribosomal protein S5 domain 2-like"/>
    <property type="match status" value="1"/>
</dbReference>
<dbReference type="PROSITE" id="PS00648">
    <property type="entry name" value="RIBONUCLEASE_P"/>
    <property type="match status" value="1"/>
</dbReference>
<comment type="function">
    <text evidence="1">RNaseP catalyzes the removal of the 5'-leader sequence from pre-tRNA to produce the mature 5'-terminus. It can also cleave other RNA substrates such as 4.5S RNA. The protein component plays an auxiliary but essential role in vivo by binding to the 5'-leader sequence and broadening the substrate specificity of the ribozyme.</text>
</comment>
<comment type="catalytic activity">
    <reaction evidence="1">
        <text>Endonucleolytic cleavage of RNA, removing 5'-extranucleotides from tRNA precursor.</text>
        <dbReference type="EC" id="3.1.26.5"/>
    </reaction>
</comment>
<comment type="subunit">
    <text evidence="1">Consists of a catalytic RNA component (M1 or rnpB) and a protein subunit.</text>
</comment>
<comment type="similarity">
    <text evidence="1">Belongs to the RnpA family.</text>
</comment>
<accession>Q6F6K8</accession>
<keyword id="KW-0255">Endonuclease</keyword>
<keyword id="KW-0378">Hydrolase</keyword>
<keyword id="KW-0540">Nuclease</keyword>
<keyword id="KW-0694">RNA-binding</keyword>
<keyword id="KW-0819">tRNA processing</keyword>
<sequence>MMTLYSFSTEVRLRCAADYQGVFDGALFKVHQPHFLFLAKPSEQLQSRLGVIVAKKKVRRAHERNRIKRLARESFRLHQQQLGLLDIVVMPKIGIEAVSNADLHQQLEFAWQKLQRQAKKYQKVAVSPSLH</sequence>
<reference key="1">
    <citation type="journal article" date="2004" name="Nucleic Acids Res.">
        <title>Unique features revealed by the genome sequence of Acinetobacter sp. ADP1, a versatile and naturally transformation competent bacterium.</title>
        <authorList>
            <person name="Barbe V."/>
            <person name="Vallenet D."/>
            <person name="Fonknechten N."/>
            <person name="Kreimeyer A."/>
            <person name="Oztas S."/>
            <person name="Labarre L."/>
            <person name="Cruveiller S."/>
            <person name="Robert C."/>
            <person name="Duprat S."/>
            <person name="Wincker P."/>
            <person name="Ornston L.N."/>
            <person name="Weissenbach J."/>
            <person name="Marliere P."/>
            <person name="Cohen G.N."/>
            <person name="Medigue C."/>
        </authorList>
    </citation>
    <scope>NUCLEOTIDE SEQUENCE [LARGE SCALE GENOMIC DNA]</scope>
    <source>
        <strain>ATCC 33305 / BD413 / ADP1</strain>
    </source>
</reference>
<gene>
    <name evidence="1" type="primary">rnpA</name>
    <name type="ordered locus">ACIAD3683</name>
</gene>
<evidence type="ECO:0000255" key="1">
    <source>
        <dbReference type="HAMAP-Rule" id="MF_00227"/>
    </source>
</evidence>